<feature type="signal peptide" evidence="2">
    <location>
        <begin position="1"/>
        <end position="24"/>
    </location>
</feature>
<feature type="chain" id="PRO_0000045967" description="Inactive ribonuclease-like protein 10">
    <location>
        <begin position="25"/>
        <end position="212"/>
    </location>
</feature>
<feature type="sequence conflict" description="In Ref. 2; CAE45266." evidence="4" ref="2">
    <original>I</original>
    <variation>F</variation>
    <location>
        <position position="8"/>
    </location>
</feature>
<comment type="function">
    <text evidence="1">Secreted proximal epididymal protein required for post-testicular sperm maturation and male fertility. May be involved in sperm adhesion to the egg zona pellucida. Does not have ribonuclease activity (By similarity).</text>
</comment>
<comment type="subcellular location">
    <subcellularLocation>
        <location evidence="1">Secreted</location>
    </subcellularLocation>
</comment>
<comment type="tissue specificity">
    <text evidence="3">Male-specific expression in proximal caput of the epididymis.</text>
</comment>
<comment type="PTM">
    <text evidence="1">The N-terminus is blocked. Glycosylated (By similarity).</text>
</comment>
<comment type="similarity">
    <text evidence="4">Belongs to the pancreatic ribonuclease family.</text>
</comment>
<protein>
    <recommendedName>
        <fullName>Inactive ribonuclease-like protein 10</fullName>
    </recommendedName>
    <alternativeName>
        <fullName>Protein Train A</fullName>
    </alternativeName>
</protein>
<sequence>MKLTLVQIFFMMLLLLLGLGVGLGLGLQMAAAVLEESDQLLDEFLSSDSQDKAEATKEGLDSQSTETLLVSNKVVPPEDTIVNEDDVGGDRMLRAEVLSQSNKHYLRSDVMDRECNALMAPNLKSKDHPCIPQYVFIHEEPDTVKAVCKSPAVACDLKEGKCHKSPRPFDLTFCKLSKSGQVIPHCNYVTFILEKYILMSCSDMKVQITSKS</sequence>
<gene>
    <name type="primary">RNASE10</name>
</gene>
<organism>
    <name type="scientific">Ovis aries</name>
    <name type="common">Sheep</name>
    <dbReference type="NCBI Taxonomy" id="9940"/>
    <lineage>
        <taxon>Eukaryota</taxon>
        <taxon>Metazoa</taxon>
        <taxon>Chordata</taxon>
        <taxon>Craniata</taxon>
        <taxon>Vertebrata</taxon>
        <taxon>Euteleostomi</taxon>
        <taxon>Mammalia</taxon>
        <taxon>Eutheria</taxon>
        <taxon>Laurasiatheria</taxon>
        <taxon>Artiodactyla</taxon>
        <taxon>Ruminantia</taxon>
        <taxon>Pecora</taxon>
        <taxon>Bovidae</taxon>
        <taxon>Caprinae</taxon>
        <taxon>Ovis</taxon>
    </lineage>
</organism>
<evidence type="ECO:0000250" key="1"/>
<evidence type="ECO:0000255" key="2"/>
<evidence type="ECO:0000269" key="3">
    <source>
    </source>
</evidence>
<evidence type="ECO:0000305" key="4"/>
<dbReference type="EMBL" id="AMGL01102297">
    <property type="status" value="NOT_ANNOTATED_CDS"/>
    <property type="molecule type" value="Genomic_DNA"/>
</dbReference>
<dbReference type="EMBL" id="AJ580634">
    <property type="protein sequence ID" value="CAE45266.1"/>
    <property type="molecule type" value="mRNA"/>
</dbReference>
<dbReference type="SMR" id="Q70IB1"/>
<dbReference type="STRING" id="9940.ENSOARP00000021193"/>
<dbReference type="PaxDb" id="9940-ENSOARP00000021193"/>
<dbReference type="Ensembl" id="ENSOART00185049166">
    <property type="protein sequence ID" value="ENSOARP00185024859"/>
    <property type="gene ID" value="ENSOARG00185029595"/>
</dbReference>
<dbReference type="Ensembl" id="ENSOART00215084664">
    <property type="protein sequence ID" value="ENSOARP00215046659"/>
    <property type="gene ID" value="ENSOARG00215049906"/>
</dbReference>
<dbReference type="Ensembl" id="ENSOART00220062303">
    <property type="protein sequence ID" value="ENSOARP00220033386"/>
    <property type="gene ID" value="ENSOARG00220037621"/>
</dbReference>
<dbReference type="Ensembl" id="ENSOART00225079562">
    <property type="protein sequence ID" value="ENSOARP00225041127"/>
    <property type="gene ID" value="ENSOARG00225047897"/>
</dbReference>
<dbReference type="eggNOG" id="ENOG502RPGF">
    <property type="taxonomic scope" value="Eukaryota"/>
</dbReference>
<dbReference type="Proteomes" id="UP000002356">
    <property type="component" value="Unplaced"/>
</dbReference>
<dbReference type="GO" id="GO:0005576">
    <property type="term" value="C:extracellular region"/>
    <property type="evidence" value="ECO:0007669"/>
    <property type="project" value="UniProtKB-SubCell"/>
</dbReference>
<dbReference type="GO" id="GO:0003676">
    <property type="term" value="F:nucleic acid binding"/>
    <property type="evidence" value="ECO:0007669"/>
    <property type="project" value="InterPro"/>
</dbReference>
<dbReference type="GO" id="GO:0050830">
    <property type="term" value="P:defense response to Gram-positive bacterium"/>
    <property type="evidence" value="ECO:0007669"/>
    <property type="project" value="TreeGrafter"/>
</dbReference>
<dbReference type="GO" id="GO:0034113">
    <property type="term" value="P:heterotypic cell-cell adhesion"/>
    <property type="evidence" value="ECO:0000250"/>
    <property type="project" value="UniProtKB"/>
</dbReference>
<dbReference type="GO" id="GO:0022409">
    <property type="term" value="P:positive regulation of cell-cell adhesion"/>
    <property type="evidence" value="ECO:0000250"/>
    <property type="project" value="UniProtKB"/>
</dbReference>
<dbReference type="GO" id="GO:1902093">
    <property type="term" value="P:positive regulation of flagellated sperm motility"/>
    <property type="evidence" value="ECO:0000250"/>
    <property type="project" value="UniProtKB"/>
</dbReference>
<dbReference type="GO" id="GO:0080154">
    <property type="term" value="P:regulation of fertilization"/>
    <property type="evidence" value="ECO:0000250"/>
    <property type="project" value="UniProtKB"/>
</dbReference>
<dbReference type="GO" id="GO:0007338">
    <property type="term" value="P:single fertilization"/>
    <property type="evidence" value="ECO:0007669"/>
    <property type="project" value="UniProtKB-KW"/>
</dbReference>
<dbReference type="CDD" id="cd00163">
    <property type="entry name" value="RNase_A"/>
    <property type="match status" value="1"/>
</dbReference>
<dbReference type="FunFam" id="3.10.130.10:FF:000002">
    <property type="entry name" value="Inactive ribonuclease-like protein 10"/>
    <property type="match status" value="1"/>
</dbReference>
<dbReference type="Gene3D" id="3.10.130.10">
    <property type="entry name" value="Ribonuclease A-like domain"/>
    <property type="match status" value="1"/>
</dbReference>
<dbReference type="InterPro" id="IPR001427">
    <property type="entry name" value="RNaseA"/>
</dbReference>
<dbReference type="InterPro" id="IPR036816">
    <property type="entry name" value="RNaseA-like_dom_sf"/>
</dbReference>
<dbReference type="InterPro" id="IPR023412">
    <property type="entry name" value="RNaseA_domain"/>
</dbReference>
<dbReference type="PANTHER" id="PTHR11437:SF63">
    <property type="entry name" value="INACTIVE RIBONUCLEASE-LIKE PROTEIN 10"/>
    <property type="match status" value="1"/>
</dbReference>
<dbReference type="PANTHER" id="PTHR11437">
    <property type="entry name" value="RIBONUCLEASE"/>
    <property type="match status" value="1"/>
</dbReference>
<dbReference type="Pfam" id="PF00074">
    <property type="entry name" value="RnaseA"/>
    <property type="match status" value="1"/>
</dbReference>
<dbReference type="PRINTS" id="PR00794">
    <property type="entry name" value="RIBONUCLEASE"/>
</dbReference>
<dbReference type="SMART" id="SM00092">
    <property type="entry name" value="RNAse_Pc"/>
    <property type="match status" value="1"/>
</dbReference>
<dbReference type="SUPFAM" id="SSF54076">
    <property type="entry name" value="RNase A-like"/>
    <property type="match status" value="1"/>
</dbReference>
<accession>Q70IB1</accession>
<reference key="1">
    <citation type="journal article" date="2010" name="Anim. Genet.">
        <title>The sheep genome reference sequence: a work in progress.</title>
        <authorList>
            <person name="Archibald A.L."/>
            <person name="Cockett N.E."/>
            <person name="Dalrymple B.P."/>
            <person name="Faraut T."/>
            <person name="Kijas J.W."/>
            <person name="Maddox J.F."/>
            <person name="McEwan J.C."/>
            <person name="Hutton Oddy V."/>
            <person name="Raadsma H.W."/>
            <person name="Wade C."/>
            <person name="Wang J."/>
            <person name="Wang W."/>
            <person name="Xun X."/>
        </authorList>
    </citation>
    <scope>NUCLEOTIDE SEQUENCE [GENOMIC DNA]</scope>
</reference>
<reference key="2">
    <citation type="journal article" date="2004" name="Biol. Reprod.">
        <title>Identification of a member of a new RNase A family specifically secreted by epididymal caput epithelium.</title>
        <authorList>
            <person name="Castella S."/>
            <person name="Fouchecourt S."/>
            <person name="Teixeira-Gomes A.P."/>
            <person name="Vinh J."/>
            <person name="Belghazi M."/>
            <person name="Dacheux F."/>
            <person name="Dacheux J.-L."/>
        </authorList>
    </citation>
    <scope>NUCLEOTIDE SEQUENCE [MRNA] OF 1-161</scope>
    <scope>TISSUE SPECIFICITY</scope>
    <source>
        <tissue>Epididymis</tissue>
    </source>
</reference>
<name>RNS10_SHEEP</name>
<proteinExistence type="evidence at transcript level"/>
<keyword id="KW-0130">Cell adhesion</keyword>
<keyword id="KW-0278">Fertilization</keyword>
<keyword id="KW-0325">Glycoprotein</keyword>
<keyword id="KW-1185">Reference proteome</keyword>
<keyword id="KW-0964">Secreted</keyword>
<keyword id="KW-0732">Signal</keyword>